<organism>
    <name type="scientific">Methanosarcina acetivorans (strain ATCC 35395 / DSM 2834 / JCM 12185 / C2A)</name>
    <dbReference type="NCBI Taxonomy" id="188937"/>
    <lineage>
        <taxon>Archaea</taxon>
        <taxon>Methanobacteriati</taxon>
        <taxon>Methanobacteriota</taxon>
        <taxon>Stenosarchaea group</taxon>
        <taxon>Methanomicrobia</taxon>
        <taxon>Methanosarcinales</taxon>
        <taxon>Methanosarcinaceae</taxon>
        <taxon>Methanosarcina</taxon>
    </lineage>
</organism>
<protein>
    <recommendedName>
        <fullName>Probable 2-isopropylmalate synthase</fullName>
        <ecNumber evidence="3">2.3.3.13</ecNumber>
    </recommendedName>
    <alternativeName>
        <fullName>Alpha-IPM synthase</fullName>
    </alternativeName>
    <alternativeName>
        <fullName>Alpha-isopropylmalate synthase</fullName>
    </alternativeName>
</protein>
<proteinExistence type="inferred from homology"/>
<reference key="1">
    <citation type="journal article" date="2002" name="Genome Res.">
        <title>The genome of Methanosarcina acetivorans reveals extensive metabolic and physiological diversity.</title>
        <authorList>
            <person name="Galagan J.E."/>
            <person name="Nusbaum C."/>
            <person name="Roy A."/>
            <person name="Endrizzi M.G."/>
            <person name="Macdonald P."/>
            <person name="FitzHugh W."/>
            <person name="Calvo S."/>
            <person name="Engels R."/>
            <person name="Smirnov S."/>
            <person name="Atnoor D."/>
            <person name="Brown A."/>
            <person name="Allen N."/>
            <person name="Naylor J."/>
            <person name="Stange-Thomann N."/>
            <person name="DeArellano K."/>
            <person name="Johnson R."/>
            <person name="Linton L."/>
            <person name="McEwan P."/>
            <person name="McKernan K."/>
            <person name="Talamas J."/>
            <person name="Tirrell A."/>
            <person name="Ye W."/>
            <person name="Zimmer A."/>
            <person name="Barber R.D."/>
            <person name="Cann I."/>
            <person name="Graham D.E."/>
            <person name="Grahame D.A."/>
            <person name="Guss A.M."/>
            <person name="Hedderich R."/>
            <person name="Ingram-Smith C."/>
            <person name="Kuettner H.C."/>
            <person name="Krzycki J.A."/>
            <person name="Leigh J.A."/>
            <person name="Li W."/>
            <person name="Liu J."/>
            <person name="Mukhopadhyay B."/>
            <person name="Reeve J.N."/>
            <person name="Smith K."/>
            <person name="Springer T.A."/>
            <person name="Umayam L.A."/>
            <person name="White O."/>
            <person name="White R.H."/>
            <person name="de Macario E.C."/>
            <person name="Ferry J.G."/>
            <person name="Jarrell K.F."/>
            <person name="Jing H."/>
            <person name="Macario A.J.L."/>
            <person name="Paulsen I.T."/>
            <person name="Pritchett M."/>
            <person name="Sowers K.R."/>
            <person name="Swanson R.V."/>
            <person name="Zinder S.H."/>
            <person name="Lander E."/>
            <person name="Metcalf W.W."/>
            <person name="Birren B."/>
        </authorList>
    </citation>
    <scope>NUCLEOTIDE SEQUENCE [LARGE SCALE GENOMIC DNA]</scope>
    <source>
        <strain>ATCC 35395 / DSM 2834 / JCM 12185 / C2A</strain>
    </source>
</reference>
<accession>Q8THA5</accession>
<dbReference type="EC" id="2.3.3.13" evidence="3"/>
<dbReference type="EMBL" id="AE010299">
    <property type="protein sequence ID" value="AAM07951.1"/>
    <property type="molecule type" value="Genomic_DNA"/>
</dbReference>
<dbReference type="RefSeq" id="WP_011024485.1">
    <property type="nucleotide sequence ID" value="NC_003552.1"/>
</dbReference>
<dbReference type="SMR" id="Q8THA5"/>
<dbReference type="FunCoup" id="Q8THA5">
    <property type="interactions" value="221"/>
</dbReference>
<dbReference type="STRING" id="188937.MA_4615"/>
<dbReference type="EnsemblBacteria" id="AAM07951">
    <property type="protein sequence ID" value="AAM07951"/>
    <property type="gene ID" value="MA_4615"/>
</dbReference>
<dbReference type="GeneID" id="1476509"/>
<dbReference type="KEGG" id="mac:MA_4615"/>
<dbReference type="HOGENOM" id="CLU_022158_0_1_2"/>
<dbReference type="InParanoid" id="Q8THA5"/>
<dbReference type="OrthoDB" id="6555at2157"/>
<dbReference type="PhylomeDB" id="Q8THA5"/>
<dbReference type="UniPathway" id="UPA00048">
    <property type="reaction ID" value="UER00070"/>
</dbReference>
<dbReference type="Proteomes" id="UP000002487">
    <property type="component" value="Chromosome"/>
</dbReference>
<dbReference type="GO" id="GO:0003852">
    <property type="term" value="F:2-isopropylmalate synthase activity"/>
    <property type="evidence" value="ECO:0007669"/>
    <property type="project" value="UniProtKB-EC"/>
</dbReference>
<dbReference type="GO" id="GO:0046872">
    <property type="term" value="F:metal ion binding"/>
    <property type="evidence" value="ECO:0007669"/>
    <property type="project" value="UniProtKB-KW"/>
</dbReference>
<dbReference type="GO" id="GO:0019298">
    <property type="term" value="P:coenzyme B biosynthetic process"/>
    <property type="evidence" value="ECO:0000318"/>
    <property type="project" value="GO_Central"/>
</dbReference>
<dbReference type="GO" id="GO:0009098">
    <property type="term" value="P:L-leucine biosynthetic process"/>
    <property type="evidence" value="ECO:0007669"/>
    <property type="project" value="UniProtKB-UniPathway"/>
</dbReference>
<dbReference type="CDD" id="cd07940">
    <property type="entry name" value="DRE_TIM_IPMS"/>
    <property type="match status" value="1"/>
</dbReference>
<dbReference type="FunFam" id="1.10.238.260:FF:000001">
    <property type="entry name" value="2-isopropylmalate synthase"/>
    <property type="match status" value="1"/>
</dbReference>
<dbReference type="FunFam" id="3.20.20.70:FF:000010">
    <property type="entry name" value="2-isopropylmalate synthase"/>
    <property type="match status" value="1"/>
</dbReference>
<dbReference type="FunFam" id="3.30.160.270:FF:000003">
    <property type="entry name" value="2-isopropylmalate synthase"/>
    <property type="match status" value="1"/>
</dbReference>
<dbReference type="Gene3D" id="1.10.238.260">
    <property type="match status" value="1"/>
</dbReference>
<dbReference type="Gene3D" id="3.30.160.270">
    <property type="match status" value="1"/>
</dbReference>
<dbReference type="Gene3D" id="3.20.20.70">
    <property type="entry name" value="Aldolase class I"/>
    <property type="match status" value="1"/>
</dbReference>
<dbReference type="InterPro" id="IPR050073">
    <property type="entry name" value="2-IPM_HCS-like"/>
</dbReference>
<dbReference type="InterPro" id="IPR013709">
    <property type="entry name" value="2-isopropylmalate_synth_dimer"/>
</dbReference>
<dbReference type="InterPro" id="IPR002034">
    <property type="entry name" value="AIPM/Hcit_synth_CS"/>
</dbReference>
<dbReference type="InterPro" id="IPR013785">
    <property type="entry name" value="Aldolase_TIM"/>
</dbReference>
<dbReference type="InterPro" id="IPR011830">
    <property type="entry name" value="LEU1_arch"/>
</dbReference>
<dbReference type="InterPro" id="IPR054691">
    <property type="entry name" value="LeuA/HCS_post-cat"/>
</dbReference>
<dbReference type="InterPro" id="IPR036230">
    <property type="entry name" value="LeuA_allosteric_dom_sf"/>
</dbReference>
<dbReference type="InterPro" id="IPR000891">
    <property type="entry name" value="PYR_CT"/>
</dbReference>
<dbReference type="NCBIfam" id="TIGR02090">
    <property type="entry name" value="LEU1_arch"/>
    <property type="match status" value="1"/>
</dbReference>
<dbReference type="NCBIfam" id="NF002085">
    <property type="entry name" value="PRK00915.1-2"/>
    <property type="match status" value="1"/>
</dbReference>
<dbReference type="NCBIfam" id="NF002086">
    <property type="entry name" value="PRK00915.1-3"/>
    <property type="match status" value="1"/>
</dbReference>
<dbReference type="PANTHER" id="PTHR10277:SF9">
    <property type="entry name" value="2-ISOPROPYLMALATE SYNTHASE 1, CHLOROPLASTIC-RELATED"/>
    <property type="match status" value="1"/>
</dbReference>
<dbReference type="PANTHER" id="PTHR10277">
    <property type="entry name" value="HOMOCITRATE SYNTHASE-RELATED"/>
    <property type="match status" value="1"/>
</dbReference>
<dbReference type="Pfam" id="PF22617">
    <property type="entry name" value="HCS_D2"/>
    <property type="match status" value="1"/>
</dbReference>
<dbReference type="Pfam" id="PF00682">
    <property type="entry name" value="HMGL-like"/>
    <property type="match status" value="1"/>
</dbReference>
<dbReference type="Pfam" id="PF08502">
    <property type="entry name" value="LeuA_dimer"/>
    <property type="match status" value="1"/>
</dbReference>
<dbReference type="SMART" id="SM00917">
    <property type="entry name" value="LeuA_dimer"/>
    <property type="match status" value="1"/>
</dbReference>
<dbReference type="SUPFAM" id="SSF110921">
    <property type="entry name" value="2-isopropylmalate synthase LeuA, allosteric (dimerisation) domain"/>
    <property type="match status" value="1"/>
</dbReference>
<dbReference type="SUPFAM" id="SSF51569">
    <property type="entry name" value="Aldolase"/>
    <property type="match status" value="1"/>
</dbReference>
<dbReference type="PROSITE" id="PS00815">
    <property type="entry name" value="AIPM_HOMOCIT_SYNTH_1"/>
    <property type="match status" value="1"/>
</dbReference>
<dbReference type="PROSITE" id="PS00816">
    <property type="entry name" value="AIPM_HOMOCIT_SYNTH_2"/>
    <property type="match status" value="1"/>
</dbReference>
<dbReference type="PROSITE" id="PS50991">
    <property type="entry name" value="PYR_CT"/>
    <property type="match status" value="1"/>
</dbReference>
<comment type="function">
    <text evidence="1 3">Catalyzes the condensation of the acetyl group of acetyl-CoA with 3-methyl-2-oxobutanoate (2-oxoisovalerate) to form 3-carboxy-3-hydroxy-4-methylpentanoate (2-isopropylmalate).</text>
</comment>
<comment type="catalytic activity">
    <reaction evidence="3">
        <text>3-methyl-2-oxobutanoate + acetyl-CoA + H2O = (2S)-2-isopropylmalate + CoA + H(+)</text>
        <dbReference type="Rhea" id="RHEA:21524"/>
        <dbReference type="ChEBI" id="CHEBI:1178"/>
        <dbReference type="ChEBI" id="CHEBI:11851"/>
        <dbReference type="ChEBI" id="CHEBI:15377"/>
        <dbReference type="ChEBI" id="CHEBI:15378"/>
        <dbReference type="ChEBI" id="CHEBI:57287"/>
        <dbReference type="ChEBI" id="CHEBI:57288"/>
        <dbReference type="EC" id="2.3.3.13"/>
    </reaction>
</comment>
<comment type="cofactor">
    <cofactor evidence="4">
        <name>a divalent metal cation</name>
        <dbReference type="ChEBI" id="CHEBI:60240"/>
    </cofactor>
</comment>
<comment type="pathway">
    <text>Amino-acid biosynthesis; L-leucine biosynthesis; L-leucine from 3-methyl-2-oxobutanoate: step 1/4.</text>
</comment>
<comment type="subunit">
    <text evidence="2">Homodimer.</text>
</comment>
<comment type="similarity">
    <text evidence="6">Belongs to the alpha-IPM synthase/homocitrate synthase family.</text>
</comment>
<keyword id="KW-0028">Amino-acid biosynthesis</keyword>
<keyword id="KW-0100">Branched-chain amino acid biosynthesis</keyword>
<keyword id="KW-0432">Leucine biosynthesis</keyword>
<keyword id="KW-0479">Metal-binding</keyword>
<keyword id="KW-1185">Reference proteome</keyword>
<keyword id="KW-0808">Transferase</keyword>
<gene>
    <name type="primary">leuA</name>
    <name type="ordered locus">MA_4615</name>
</gene>
<feature type="chain" id="PRO_0000140409" description="Probable 2-isopropylmalate synthase">
    <location>
        <begin position="1"/>
        <end position="515"/>
    </location>
</feature>
<feature type="domain" description="Pyruvate carboxyltransferase" evidence="5">
    <location>
        <begin position="20"/>
        <end position="271"/>
    </location>
</feature>
<feature type="binding site" evidence="4">
    <location>
        <position position="29"/>
    </location>
    <ligand>
        <name>a divalent metal cation</name>
        <dbReference type="ChEBI" id="CHEBI:60240"/>
    </ligand>
</feature>
<feature type="binding site" evidence="4">
    <location>
        <position position="209"/>
    </location>
    <ligand>
        <name>a divalent metal cation</name>
        <dbReference type="ChEBI" id="CHEBI:60240"/>
    </ligand>
</feature>
<feature type="binding site" evidence="4">
    <location>
        <position position="211"/>
    </location>
    <ligand>
        <name>a divalent metal cation</name>
        <dbReference type="ChEBI" id="CHEBI:60240"/>
    </ligand>
</feature>
<feature type="binding site" evidence="4">
    <location>
        <position position="245"/>
    </location>
    <ligand>
        <name>a divalent metal cation</name>
        <dbReference type="ChEBI" id="CHEBI:60240"/>
    </ligand>
</feature>
<evidence type="ECO:0000250" key="1"/>
<evidence type="ECO:0000250" key="2">
    <source>
        <dbReference type="UniProtKB" id="P9WQB3"/>
    </source>
</evidence>
<evidence type="ECO:0000250" key="3">
    <source>
        <dbReference type="UniProtKB" id="Q4JA78"/>
    </source>
</evidence>
<evidence type="ECO:0000250" key="4">
    <source>
        <dbReference type="UniProtKB" id="Q9JZG1"/>
    </source>
</evidence>
<evidence type="ECO:0000255" key="5">
    <source>
        <dbReference type="PROSITE-ProRule" id="PRU01151"/>
    </source>
</evidence>
<evidence type="ECO:0000305" key="6"/>
<sequence>MYTLKEGIDFYIEPMQNKKVTVFDTTLRDGEQTPGVSLTSSQKLEISRQLDKLGVDIIEAGFPISSEGDKESVKSISNAGLETTVCGLARVLKKDIDACFESDVGLVHTFVPTSDVQRIYTIKKSQEEVIQLAVEAVQYIKDHGLKCMFSAMDATRTDPAYLIEVFKAVQEAGCDIINVPDTVGVMVPSAMYRQIKDIAAEITIPIDVHCHNDFGLAVANSLMAVEAGASQVQVTINGIGERAGNADLAQTVMSLASIYGIKTNIRTEYLVETSKMIENYTGIRLPPNTPVVGQNAFSHESGIHSQGVLEKSDTFEPGIMTPEMVGHRRRIVLGKHTGKHAVKQSLESAGVKTSENQLDEIVLRIKEIANKGKQITDADLYAVASAVLGKASSEEELIKLKEVSVMTGNILTPTAVVKADIEGKEIIAAKTGVGPVDAALKAVRDILGESNHFRLQEFRIDAITGGADALADVYIGLENEKGRIVTARSANPDIVMASVEALINAMNLLYKKEKS</sequence>
<name>LEU1_METAC</name>